<name>SND1_SCHPO</name>
<gene>
    <name evidence="7" type="primary">snd1</name>
    <name evidence="6" type="synonym">sn4tdr</name>
    <name type="ORF">SPCC645.08c</name>
</gene>
<evidence type="ECO:0000255" key="1">
    <source>
        <dbReference type="PROSITE-ProRule" id="PRU00211"/>
    </source>
</evidence>
<evidence type="ECO:0000255" key="2">
    <source>
        <dbReference type="PROSITE-ProRule" id="PRU00272"/>
    </source>
</evidence>
<evidence type="ECO:0000269" key="3">
    <source>
    </source>
</evidence>
<evidence type="ECO:0000269" key="4">
    <source>
    </source>
</evidence>
<evidence type="ECO:0000305" key="5"/>
<evidence type="ECO:0000312" key="6">
    <source>
        <dbReference type="EMBL" id="BAC75640.1"/>
    </source>
</evidence>
<evidence type="ECO:0000312" key="7">
    <source>
        <dbReference type="EMBL" id="CAB39904.1"/>
    </source>
</evidence>
<comment type="subcellular location">
    <subcellularLocation>
        <location evidence="3">Cytoplasm</location>
        <location evidence="3">Cytosol</location>
    </subcellularLocation>
</comment>
<sequence length="878" mass="98161">MSQYVSSMIKYAQSGDSFNILIKDNAKKITEKQFSLAYVECPRFRREGDEPFAFEAQEFSRRLVVGRPASVSTLYVIPTSKREYGRIRTSEFDLAESLLREGLAKLRPEATRNEGTSENSYFVSLEEAQDHAQQYKLGIWGPSDDVVVTEKANPANPAKFLKAHKGKKLNGIVETIRNGDQVRVRLFLSPKQHQLVTISLAGVRCPRSTFTATSPEQTSSEQEPCGDEAKQFVVTRLLQRNVVIELLDLAPNGVSFLGNVLHPAGNIATFLLSSGLGRVADNHISALGPETMQSLRTIERKAKISRLGIWKNISVSIPDINSLSLKDYSAVVSRVISTDTLEVRKDNGVECRIQLSSIRHPRPSNEKEAPYQLEAREFLRKKIIGKRVQVSLDFIRPGQNDLPAINNCTVKLSDGTNVALMVVKSGYATVIRYRMDSVDRSPIYDFLIEAEKAAQEGRKGMWSGKKPAYENIVNASESSLRSRQYLSSLQRTRKLSVIIENVISGSRFRCFCPKENCYFMFACAGIRTPRTARNDQEKGEPFAEESLSLAKSLLQHDAQVEILSVDNNGCFLGDIYVNHDTNFALKLLSQGLAWCQGYASQSNVQYSQYHDTEAAAKEQKVGMWHDYVPPEKKAASTEKESENTVKEPIYLDIVLSDIAEDGKFSFQIIGTGIQQLETLMSDLGSLKKSFKPSEKINVGMNVAAISALDNAMYRGRVLRCDRENQAADVLLYDYGSVEQIPFKNISSLPDTYTKLKPQAQLARLSYVQLPPPSSDYYEDARLVFRELAMNKGLVAKVDGHEGNVYSVTLYNPSDGSDFSDCINAQLVALGMASVIPKKKTSHFEKDTASLNILEEHQQEARLNHIGFWVYGDPLEYED</sequence>
<protein>
    <recommendedName>
        <fullName>Staphylococcal nuclease domain-containing protein 1</fullName>
    </recommendedName>
    <alternativeName>
        <fullName>4SNc-Tudor domain protein</fullName>
    </alternativeName>
</protein>
<dbReference type="EMBL" id="AB108422">
    <property type="protein sequence ID" value="BAC75640.1"/>
    <property type="molecule type" value="mRNA"/>
</dbReference>
<dbReference type="EMBL" id="CU329672">
    <property type="protein sequence ID" value="CAB39904.1"/>
    <property type="molecule type" value="Genomic_DNA"/>
</dbReference>
<dbReference type="PIR" id="T41525">
    <property type="entry name" value="T41525"/>
</dbReference>
<dbReference type="RefSeq" id="NP_588117.1">
    <property type="nucleotide sequence ID" value="NM_001023107.2"/>
</dbReference>
<dbReference type="SMR" id="Q9Y7U7"/>
<dbReference type="BioGRID" id="276051">
    <property type="interactions" value="23"/>
</dbReference>
<dbReference type="FunCoup" id="Q9Y7U7">
    <property type="interactions" value="945"/>
</dbReference>
<dbReference type="STRING" id="284812.Q9Y7U7"/>
<dbReference type="iPTMnet" id="Q9Y7U7"/>
<dbReference type="PaxDb" id="4896-SPCC645.08c.1"/>
<dbReference type="EnsemblFungi" id="SPCC645.08c.1">
    <property type="protein sequence ID" value="SPCC645.08c.1:pep"/>
    <property type="gene ID" value="SPCC645.08c"/>
</dbReference>
<dbReference type="GeneID" id="2539488"/>
<dbReference type="KEGG" id="spo:2539488"/>
<dbReference type="PomBase" id="SPCC645.08c">
    <property type="gene designation" value="snd1"/>
</dbReference>
<dbReference type="VEuPathDB" id="FungiDB:SPCC645.08c"/>
<dbReference type="eggNOG" id="KOG2039">
    <property type="taxonomic scope" value="Eukaryota"/>
</dbReference>
<dbReference type="HOGENOM" id="CLU_005966_1_0_1"/>
<dbReference type="InParanoid" id="Q9Y7U7"/>
<dbReference type="OMA" id="ARCADHH"/>
<dbReference type="PhylomeDB" id="Q9Y7U7"/>
<dbReference type="PRO" id="PR:Q9Y7U7"/>
<dbReference type="Proteomes" id="UP000002485">
    <property type="component" value="Chromosome III"/>
</dbReference>
<dbReference type="GO" id="GO:0005829">
    <property type="term" value="C:cytosol"/>
    <property type="evidence" value="ECO:0007005"/>
    <property type="project" value="PomBase"/>
</dbReference>
<dbReference type="GO" id="GO:0005634">
    <property type="term" value="C:nucleus"/>
    <property type="evidence" value="ECO:0000318"/>
    <property type="project" value="GO_Central"/>
</dbReference>
<dbReference type="GO" id="GO:0031332">
    <property type="term" value="C:RNAi effector complex"/>
    <property type="evidence" value="ECO:0007669"/>
    <property type="project" value="InterPro"/>
</dbReference>
<dbReference type="GO" id="GO:0004518">
    <property type="term" value="F:nuclease activity"/>
    <property type="evidence" value="ECO:0000318"/>
    <property type="project" value="GO_Central"/>
</dbReference>
<dbReference type="GO" id="GO:0003723">
    <property type="term" value="F:RNA binding"/>
    <property type="evidence" value="ECO:0000318"/>
    <property type="project" value="GO_Central"/>
</dbReference>
<dbReference type="GO" id="GO:0006402">
    <property type="term" value="P:mRNA catabolic process"/>
    <property type="evidence" value="ECO:0000318"/>
    <property type="project" value="GO_Central"/>
</dbReference>
<dbReference type="GO" id="GO:0031047">
    <property type="term" value="P:regulatory ncRNA-mediated gene silencing"/>
    <property type="evidence" value="ECO:0007669"/>
    <property type="project" value="InterPro"/>
</dbReference>
<dbReference type="CDD" id="cd00175">
    <property type="entry name" value="SNc"/>
    <property type="match status" value="3"/>
</dbReference>
<dbReference type="FunFam" id="2.40.50.90:FF:000010">
    <property type="entry name" value="Ribonuclease"/>
    <property type="match status" value="1"/>
</dbReference>
<dbReference type="FunFam" id="2.30.30.140:FF:000018">
    <property type="entry name" value="Serine/threonine-protein kinase 31"/>
    <property type="match status" value="1"/>
</dbReference>
<dbReference type="FunFam" id="2.40.50.90:FF:000062">
    <property type="entry name" value="Tudor domain containing protein"/>
    <property type="match status" value="1"/>
</dbReference>
<dbReference type="Gene3D" id="2.30.30.140">
    <property type="match status" value="1"/>
</dbReference>
<dbReference type="Gene3D" id="2.40.50.90">
    <property type="match status" value="5"/>
</dbReference>
<dbReference type="InterPro" id="IPR016685">
    <property type="entry name" value="Silence_cplx_Nase-comp_TudorSN"/>
</dbReference>
<dbReference type="InterPro" id="IPR035437">
    <property type="entry name" value="SNase_OB-fold_sf"/>
</dbReference>
<dbReference type="InterPro" id="IPR016071">
    <property type="entry name" value="Staphylococal_nuclease_OB-fold"/>
</dbReference>
<dbReference type="InterPro" id="IPR002999">
    <property type="entry name" value="Tudor"/>
</dbReference>
<dbReference type="PANTHER" id="PTHR12302">
    <property type="entry name" value="EBNA2 BINDING PROTEIN P100"/>
    <property type="match status" value="1"/>
</dbReference>
<dbReference type="PANTHER" id="PTHR12302:SF2">
    <property type="entry name" value="STAPHYLOCOCCAL NUCLEASE DOMAIN-CONTAINING PROTEIN 1"/>
    <property type="match status" value="1"/>
</dbReference>
<dbReference type="Pfam" id="PF00565">
    <property type="entry name" value="SNase"/>
    <property type="match status" value="4"/>
</dbReference>
<dbReference type="Pfam" id="PF00567">
    <property type="entry name" value="TUDOR"/>
    <property type="match status" value="1"/>
</dbReference>
<dbReference type="PIRSF" id="PIRSF017179">
    <property type="entry name" value="RISC-Tudor-SN"/>
    <property type="match status" value="1"/>
</dbReference>
<dbReference type="SMART" id="SM00318">
    <property type="entry name" value="SNc"/>
    <property type="match status" value="4"/>
</dbReference>
<dbReference type="SMART" id="SM00333">
    <property type="entry name" value="TUDOR"/>
    <property type="match status" value="1"/>
</dbReference>
<dbReference type="SUPFAM" id="SSF50199">
    <property type="entry name" value="Staphylococcal nuclease"/>
    <property type="match status" value="5"/>
</dbReference>
<dbReference type="SUPFAM" id="SSF63748">
    <property type="entry name" value="Tudor/PWWP/MBT"/>
    <property type="match status" value="1"/>
</dbReference>
<dbReference type="PROSITE" id="PS50830">
    <property type="entry name" value="TNASE_3"/>
    <property type="match status" value="4"/>
</dbReference>
<dbReference type="PROSITE" id="PS50304">
    <property type="entry name" value="TUDOR"/>
    <property type="match status" value="1"/>
</dbReference>
<feature type="chain" id="PRO_0000315882" description="Staphylococcal nuclease domain-containing protein 1">
    <location>
        <begin position="1"/>
        <end position="878"/>
    </location>
</feature>
<feature type="domain" description="TNase-like 1" evidence="2">
    <location>
        <begin position="3"/>
        <end position="142"/>
    </location>
</feature>
<feature type="domain" description="TNase-like 2" evidence="2">
    <location>
        <begin position="167"/>
        <end position="312"/>
    </location>
</feature>
<feature type="domain" description="TNase-like 3" evidence="2">
    <location>
        <begin position="326"/>
        <end position="464"/>
    </location>
</feature>
<feature type="domain" description="TNase-like 4" evidence="2">
    <location>
        <begin position="493"/>
        <end position="626"/>
    </location>
</feature>
<feature type="domain" description="Tudor" evidence="1">
    <location>
        <begin position="695"/>
        <end position="755"/>
    </location>
</feature>
<feature type="modified residue" description="Phosphoserine" evidence="4">
    <location>
        <position position="316"/>
    </location>
</feature>
<proteinExistence type="evidence at protein level"/>
<accession>Q9Y7U7</accession>
<organism>
    <name type="scientific">Schizosaccharomyces pombe (strain 972 / ATCC 24843)</name>
    <name type="common">Fission yeast</name>
    <dbReference type="NCBI Taxonomy" id="284812"/>
    <lineage>
        <taxon>Eukaryota</taxon>
        <taxon>Fungi</taxon>
        <taxon>Dikarya</taxon>
        <taxon>Ascomycota</taxon>
        <taxon>Taphrinomycotina</taxon>
        <taxon>Schizosaccharomycetes</taxon>
        <taxon>Schizosaccharomycetales</taxon>
        <taxon>Schizosaccharomycetaceae</taxon>
        <taxon>Schizosaccharomyces</taxon>
    </lineage>
</organism>
<keyword id="KW-0963">Cytoplasm</keyword>
<keyword id="KW-0597">Phosphoprotein</keyword>
<keyword id="KW-1185">Reference proteome</keyword>
<keyword id="KW-0677">Repeat</keyword>
<reference evidence="6" key="1">
    <citation type="submission" date="2003-04" db="EMBL/GenBank/DDBJ databases">
        <title>Fission yeast cDNA for 4SNc-TUDOR domain protein.</title>
        <authorList>
            <person name="Hagino T."/>
            <person name="Abe S."/>
        </authorList>
    </citation>
    <scope>NUCLEOTIDE SEQUENCE [MRNA]</scope>
    <source>
        <strain evidence="6">ARC039</strain>
    </source>
</reference>
<reference evidence="7" key="2">
    <citation type="journal article" date="2002" name="Nature">
        <title>The genome sequence of Schizosaccharomyces pombe.</title>
        <authorList>
            <person name="Wood V."/>
            <person name="Gwilliam R."/>
            <person name="Rajandream M.A."/>
            <person name="Lyne M.H."/>
            <person name="Lyne R."/>
            <person name="Stewart A."/>
            <person name="Sgouros J.G."/>
            <person name="Peat N."/>
            <person name="Hayles J."/>
            <person name="Baker S.G."/>
            <person name="Basham D."/>
            <person name="Bowman S."/>
            <person name="Brooks K."/>
            <person name="Brown D."/>
            <person name="Brown S."/>
            <person name="Chillingworth T."/>
            <person name="Churcher C.M."/>
            <person name="Collins M."/>
            <person name="Connor R."/>
            <person name="Cronin A."/>
            <person name="Davis P."/>
            <person name="Feltwell T."/>
            <person name="Fraser A."/>
            <person name="Gentles S."/>
            <person name="Goble A."/>
            <person name="Hamlin N."/>
            <person name="Harris D.E."/>
            <person name="Hidalgo J."/>
            <person name="Hodgson G."/>
            <person name="Holroyd S."/>
            <person name="Hornsby T."/>
            <person name="Howarth S."/>
            <person name="Huckle E.J."/>
            <person name="Hunt S."/>
            <person name="Jagels K."/>
            <person name="James K.D."/>
            <person name="Jones L."/>
            <person name="Jones M."/>
            <person name="Leather S."/>
            <person name="McDonald S."/>
            <person name="McLean J."/>
            <person name="Mooney P."/>
            <person name="Moule S."/>
            <person name="Mungall K.L."/>
            <person name="Murphy L.D."/>
            <person name="Niblett D."/>
            <person name="Odell C."/>
            <person name="Oliver K."/>
            <person name="O'Neil S."/>
            <person name="Pearson D."/>
            <person name="Quail M.A."/>
            <person name="Rabbinowitsch E."/>
            <person name="Rutherford K.M."/>
            <person name="Rutter S."/>
            <person name="Saunders D."/>
            <person name="Seeger K."/>
            <person name="Sharp S."/>
            <person name="Skelton J."/>
            <person name="Simmonds M.N."/>
            <person name="Squares R."/>
            <person name="Squares S."/>
            <person name="Stevens K."/>
            <person name="Taylor K."/>
            <person name="Taylor R.G."/>
            <person name="Tivey A."/>
            <person name="Walsh S.V."/>
            <person name="Warren T."/>
            <person name="Whitehead S."/>
            <person name="Woodward J.R."/>
            <person name="Volckaert G."/>
            <person name="Aert R."/>
            <person name="Robben J."/>
            <person name="Grymonprez B."/>
            <person name="Weltjens I."/>
            <person name="Vanstreels E."/>
            <person name="Rieger M."/>
            <person name="Schaefer M."/>
            <person name="Mueller-Auer S."/>
            <person name="Gabel C."/>
            <person name="Fuchs M."/>
            <person name="Duesterhoeft A."/>
            <person name="Fritzc C."/>
            <person name="Holzer E."/>
            <person name="Moestl D."/>
            <person name="Hilbert H."/>
            <person name="Borzym K."/>
            <person name="Langer I."/>
            <person name="Beck A."/>
            <person name="Lehrach H."/>
            <person name="Reinhardt R."/>
            <person name="Pohl T.M."/>
            <person name="Eger P."/>
            <person name="Zimmermann W."/>
            <person name="Wedler H."/>
            <person name="Wambutt R."/>
            <person name="Purnelle B."/>
            <person name="Goffeau A."/>
            <person name="Cadieu E."/>
            <person name="Dreano S."/>
            <person name="Gloux S."/>
            <person name="Lelaure V."/>
            <person name="Mottier S."/>
            <person name="Galibert F."/>
            <person name="Aves S.J."/>
            <person name="Xiang Z."/>
            <person name="Hunt C."/>
            <person name="Moore K."/>
            <person name="Hurst S.M."/>
            <person name="Lucas M."/>
            <person name="Rochet M."/>
            <person name="Gaillardin C."/>
            <person name="Tallada V.A."/>
            <person name="Garzon A."/>
            <person name="Thode G."/>
            <person name="Daga R.R."/>
            <person name="Cruzado L."/>
            <person name="Jimenez J."/>
            <person name="Sanchez M."/>
            <person name="del Rey F."/>
            <person name="Benito J."/>
            <person name="Dominguez A."/>
            <person name="Revuelta J.L."/>
            <person name="Moreno S."/>
            <person name="Armstrong J."/>
            <person name="Forsburg S.L."/>
            <person name="Cerutti L."/>
            <person name="Lowe T."/>
            <person name="McCombie W.R."/>
            <person name="Paulsen I."/>
            <person name="Potashkin J."/>
            <person name="Shpakovski G.V."/>
            <person name="Ussery D."/>
            <person name="Barrell B.G."/>
            <person name="Nurse P."/>
        </authorList>
    </citation>
    <scope>NUCLEOTIDE SEQUENCE [LARGE SCALE GENOMIC DNA]</scope>
    <source>
        <strain>972 / ATCC 24843</strain>
    </source>
</reference>
<reference evidence="5" key="3">
    <citation type="journal article" date="2006" name="Nat. Biotechnol.">
        <title>ORFeome cloning and global analysis of protein localization in the fission yeast Schizosaccharomyces pombe.</title>
        <authorList>
            <person name="Matsuyama A."/>
            <person name="Arai R."/>
            <person name="Yashiroda Y."/>
            <person name="Shirai A."/>
            <person name="Kamata A."/>
            <person name="Sekido S."/>
            <person name="Kobayashi Y."/>
            <person name="Hashimoto A."/>
            <person name="Hamamoto M."/>
            <person name="Hiraoka Y."/>
            <person name="Horinouchi S."/>
            <person name="Yoshida M."/>
        </authorList>
    </citation>
    <scope>SUBCELLULAR LOCATION [LARGE SCALE ANALYSIS]</scope>
</reference>
<reference key="4">
    <citation type="journal article" date="2008" name="J. Proteome Res.">
        <title>Phosphoproteome analysis of fission yeast.</title>
        <authorList>
            <person name="Wilson-Grady J.T."/>
            <person name="Villen J."/>
            <person name="Gygi S.P."/>
        </authorList>
    </citation>
    <scope>PHOSPHORYLATION [LARGE SCALE ANALYSIS] AT SER-316</scope>
    <scope>IDENTIFICATION BY MASS SPECTROMETRY</scope>
</reference>